<accession>Q8DAH8</accession>
<feature type="chain" id="PRO_0000107641" description="Acetate kinase 1">
    <location>
        <begin position="1"/>
        <end position="398"/>
    </location>
</feature>
<feature type="active site" description="Proton donor/acceptor" evidence="1">
    <location>
        <position position="146"/>
    </location>
</feature>
<feature type="binding site" evidence="1">
    <location>
        <position position="9"/>
    </location>
    <ligand>
        <name>Mg(2+)</name>
        <dbReference type="ChEBI" id="CHEBI:18420"/>
    </ligand>
</feature>
<feature type="binding site" evidence="1">
    <location>
        <position position="16"/>
    </location>
    <ligand>
        <name>ATP</name>
        <dbReference type="ChEBI" id="CHEBI:30616"/>
    </ligand>
</feature>
<feature type="binding site" evidence="1">
    <location>
        <position position="89"/>
    </location>
    <ligand>
        <name>substrate</name>
    </ligand>
</feature>
<feature type="binding site" evidence="1">
    <location>
        <begin position="206"/>
        <end position="210"/>
    </location>
    <ligand>
        <name>ATP</name>
        <dbReference type="ChEBI" id="CHEBI:30616"/>
    </ligand>
</feature>
<feature type="binding site" evidence="1">
    <location>
        <begin position="281"/>
        <end position="283"/>
    </location>
    <ligand>
        <name>ATP</name>
        <dbReference type="ChEBI" id="CHEBI:30616"/>
    </ligand>
</feature>
<feature type="binding site" evidence="1">
    <location>
        <begin position="329"/>
        <end position="333"/>
    </location>
    <ligand>
        <name>ATP</name>
        <dbReference type="ChEBI" id="CHEBI:30616"/>
    </ligand>
</feature>
<feature type="binding site" evidence="1">
    <location>
        <position position="384"/>
    </location>
    <ligand>
        <name>Mg(2+)</name>
        <dbReference type="ChEBI" id="CHEBI:18420"/>
    </ligand>
</feature>
<feature type="site" description="Transition state stabilizer" evidence="1">
    <location>
        <position position="178"/>
    </location>
</feature>
<feature type="site" description="Transition state stabilizer" evidence="1">
    <location>
        <position position="239"/>
    </location>
</feature>
<protein>
    <recommendedName>
        <fullName evidence="1">Acetate kinase 1</fullName>
        <ecNumber evidence="1">2.7.2.1</ecNumber>
    </recommendedName>
    <alternativeName>
        <fullName evidence="1">Acetokinase 1</fullName>
    </alternativeName>
</protein>
<name>ACKA1_VIBVU</name>
<comment type="function">
    <text evidence="1">Catalyzes the formation of acetyl phosphate from acetate and ATP. Can also catalyze the reverse reaction.</text>
</comment>
<comment type="catalytic activity">
    <reaction evidence="1">
        <text>acetate + ATP = acetyl phosphate + ADP</text>
        <dbReference type="Rhea" id="RHEA:11352"/>
        <dbReference type="ChEBI" id="CHEBI:22191"/>
        <dbReference type="ChEBI" id="CHEBI:30089"/>
        <dbReference type="ChEBI" id="CHEBI:30616"/>
        <dbReference type="ChEBI" id="CHEBI:456216"/>
        <dbReference type="EC" id="2.7.2.1"/>
    </reaction>
</comment>
<comment type="cofactor">
    <cofactor evidence="1">
        <name>Mg(2+)</name>
        <dbReference type="ChEBI" id="CHEBI:18420"/>
    </cofactor>
    <cofactor evidence="1">
        <name>Mn(2+)</name>
        <dbReference type="ChEBI" id="CHEBI:29035"/>
    </cofactor>
    <text evidence="1">Mg(2+). Can also accept Mn(2+).</text>
</comment>
<comment type="pathway">
    <text evidence="1">Metabolic intermediate biosynthesis; acetyl-CoA biosynthesis; acetyl-CoA from acetate: step 1/2.</text>
</comment>
<comment type="subunit">
    <text evidence="1">Homodimer.</text>
</comment>
<comment type="subcellular location">
    <subcellularLocation>
        <location evidence="1">Cytoplasm</location>
    </subcellularLocation>
</comment>
<comment type="similarity">
    <text evidence="1">Belongs to the acetokinase family.</text>
</comment>
<sequence length="398" mass="42881">MSKLVLVLNCGSSSLKFAVVDAENGAEHLSGLAECLHLPEARIKWKLDGKHEAQLGNGAAHEEALAFMVETILASKPELSENLAAIGHRVVHGGEQFTQSALITDEVLKGIEDCATLAPLHNPAHIIGIKAAQKSFPALKNVAVFDTAFHQTMPEEAYLYALPYNLYKEHGIRRYGMHGTSHLFITREVASLLNKPVEEVNIINCHLGNGASVCAVKNGQSVDTSMGLTPLEGLVMGTRCGDIDPAIIFHLHDTLGYSVEKINTMLTKESGLAGLTEVTSDCRFVEDNYGQKEEATRAMDVFCHRLAKYVAGYTATLEGRLDAITFTGGIGENSAPIREMVLNRLGIFGIEVDSEANLKARFGGEGVITTANSRIPAMVISTNEELVIAEDTARLAGL</sequence>
<evidence type="ECO:0000255" key="1">
    <source>
        <dbReference type="HAMAP-Rule" id="MF_00020"/>
    </source>
</evidence>
<dbReference type="EC" id="2.7.2.1" evidence="1"/>
<dbReference type="EMBL" id="AE016795">
    <property type="protein sequence ID" value="AAO10602.1"/>
    <property type="molecule type" value="Genomic_DNA"/>
</dbReference>
<dbReference type="RefSeq" id="WP_011080094.1">
    <property type="nucleotide sequence ID" value="NC_004459.3"/>
</dbReference>
<dbReference type="SMR" id="Q8DAH8"/>
<dbReference type="KEGG" id="vvu:VV1_2221"/>
<dbReference type="HOGENOM" id="CLU_020352_0_1_6"/>
<dbReference type="UniPathway" id="UPA00340">
    <property type="reaction ID" value="UER00458"/>
</dbReference>
<dbReference type="Proteomes" id="UP000002275">
    <property type="component" value="Chromosome 1"/>
</dbReference>
<dbReference type="GO" id="GO:0005829">
    <property type="term" value="C:cytosol"/>
    <property type="evidence" value="ECO:0007669"/>
    <property type="project" value="TreeGrafter"/>
</dbReference>
<dbReference type="GO" id="GO:0008776">
    <property type="term" value="F:acetate kinase activity"/>
    <property type="evidence" value="ECO:0007669"/>
    <property type="project" value="UniProtKB-UniRule"/>
</dbReference>
<dbReference type="GO" id="GO:0005524">
    <property type="term" value="F:ATP binding"/>
    <property type="evidence" value="ECO:0007669"/>
    <property type="project" value="UniProtKB-KW"/>
</dbReference>
<dbReference type="GO" id="GO:0000287">
    <property type="term" value="F:magnesium ion binding"/>
    <property type="evidence" value="ECO:0007669"/>
    <property type="project" value="UniProtKB-UniRule"/>
</dbReference>
<dbReference type="GO" id="GO:0006083">
    <property type="term" value="P:acetate metabolic process"/>
    <property type="evidence" value="ECO:0007669"/>
    <property type="project" value="TreeGrafter"/>
</dbReference>
<dbReference type="GO" id="GO:0006085">
    <property type="term" value="P:acetyl-CoA biosynthetic process"/>
    <property type="evidence" value="ECO:0007669"/>
    <property type="project" value="UniProtKB-UniRule"/>
</dbReference>
<dbReference type="CDD" id="cd24010">
    <property type="entry name" value="ASKHA_NBD_AcK_PK"/>
    <property type="match status" value="1"/>
</dbReference>
<dbReference type="FunFam" id="3.30.420.40:FF:000041">
    <property type="entry name" value="Acetate kinase"/>
    <property type="match status" value="1"/>
</dbReference>
<dbReference type="FunFam" id="3.30.420.40:FF:000042">
    <property type="entry name" value="Acetate kinase"/>
    <property type="match status" value="1"/>
</dbReference>
<dbReference type="Gene3D" id="3.30.420.40">
    <property type="match status" value="2"/>
</dbReference>
<dbReference type="HAMAP" id="MF_00020">
    <property type="entry name" value="Acetate_kinase"/>
    <property type="match status" value="1"/>
</dbReference>
<dbReference type="InterPro" id="IPR004372">
    <property type="entry name" value="Ac/propionate_kinase"/>
</dbReference>
<dbReference type="InterPro" id="IPR000890">
    <property type="entry name" value="Aliphatic_acid_kin_short-chain"/>
</dbReference>
<dbReference type="InterPro" id="IPR023865">
    <property type="entry name" value="Aliphatic_acid_kinase_CS"/>
</dbReference>
<dbReference type="InterPro" id="IPR043129">
    <property type="entry name" value="ATPase_NBD"/>
</dbReference>
<dbReference type="NCBIfam" id="TIGR00016">
    <property type="entry name" value="ackA"/>
    <property type="match status" value="1"/>
</dbReference>
<dbReference type="PANTHER" id="PTHR21060">
    <property type="entry name" value="ACETATE KINASE"/>
    <property type="match status" value="1"/>
</dbReference>
<dbReference type="PANTHER" id="PTHR21060:SF21">
    <property type="entry name" value="ACETATE KINASE"/>
    <property type="match status" value="1"/>
</dbReference>
<dbReference type="Pfam" id="PF00871">
    <property type="entry name" value="Acetate_kinase"/>
    <property type="match status" value="1"/>
</dbReference>
<dbReference type="PIRSF" id="PIRSF000722">
    <property type="entry name" value="Acetate_prop_kin"/>
    <property type="match status" value="1"/>
</dbReference>
<dbReference type="PRINTS" id="PR00471">
    <property type="entry name" value="ACETATEKNASE"/>
</dbReference>
<dbReference type="SUPFAM" id="SSF53067">
    <property type="entry name" value="Actin-like ATPase domain"/>
    <property type="match status" value="2"/>
</dbReference>
<dbReference type="PROSITE" id="PS01075">
    <property type="entry name" value="ACETATE_KINASE_1"/>
    <property type="match status" value="1"/>
</dbReference>
<dbReference type="PROSITE" id="PS01076">
    <property type="entry name" value="ACETATE_KINASE_2"/>
    <property type="match status" value="1"/>
</dbReference>
<gene>
    <name evidence="1" type="primary">ackA1</name>
    <name type="ordered locus">VV1_2221</name>
</gene>
<reference key="1">
    <citation type="submission" date="2002-12" db="EMBL/GenBank/DDBJ databases">
        <title>Complete genome sequence of Vibrio vulnificus CMCP6.</title>
        <authorList>
            <person name="Rhee J.H."/>
            <person name="Kim S.Y."/>
            <person name="Chung S.S."/>
            <person name="Kim J.J."/>
            <person name="Moon Y.H."/>
            <person name="Jeong H."/>
            <person name="Choy H.E."/>
        </authorList>
    </citation>
    <scope>NUCLEOTIDE SEQUENCE [LARGE SCALE GENOMIC DNA]</scope>
    <source>
        <strain>CMCP6</strain>
    </source>
</reference>
<keyword id="KW-0067">ATP-binding</keyword>
<keyword id="KW-0963">Cytoplasm</keyword>
<keyword id="KW-0418">Kinase</keyword>
<keyword id="KW-0460">Magnesium</keyword>
<keyword id="KW-0479">Metal-binding</keyword>
<keyword id="KW-0547">Nucleotide-binding</keyword>
<keyword id="KW-0808">Transferase</keyword>
<organism>
    <name type="scientific">Vibrio vulnificus (strain CMCP6)</name>
    <dbReference type="NCBI Taxonomy" id="216895"/>
    <lineage>
        <taxon>Bacteria</taxon>
        <taxon>Pseudomonadati</taxon>
        <taxon>Pseudomonadota</taxon>
        <taxon>Gammaproteobacteria</taxon>
        <taxon>Vibrionales</taxon>
        <taxon>Vibrionaceae</taxon>
        <taxon>Vibrio</taxon>
    </lineage>
</organism>
<proteinExistence type="inferred from homology"/>